<keyword id="KW-0687">Ribonucleoprotein</keyword>
<keyword id="KW-0689">Ribosomal protein</keyword>
<organism>
    <name type="scientific">Listeria welshimeri serovar 6b (strain ATCC 35897 / DSM 20650 / CCUG 15529 / CIP 8149 / NCTC 11857 / SLCC 5334 / V8)</name>
    <dbReference type="NCBI Taxonomy" id="386043"/>
    <lineage>
        <taxon>Bacteria</taxon>
        <taxon>Bacillati</taxon>
        <taxon>Bacillota</taxon>
        <taxon>Bacilli</taxon>
        <taxon>Bacillales</taxon>
        <taxon>Listeriaceae</taxon>
        <taxon>Listeria</taxon>
    </lineage>
</organism>
<reference key="1">
    <citation type="journal article" date="2006" name="J. Bacteriol.">
        <title>Whole-genome sequence of Listeria welshimeri reveals common steps in genome reduction with Listeria innocua as compared to Listeria monocytogenes.</title>
        <authorList>
            <person name="Hain T."/>
            <person name="Steinweg C."/>
            <person name="Kuenne C.T."/>
            <person name="Billion A."/>
            <person name="Ghai R."/>
            <person name="Chatterjee S.S."/>
            <person name="Domann E."/>
            <person name="Kaerst U."/>
            <person name="Goesmann A."/>
            <person name="Bekel T."/>
            <person name="Bartels D."/>
            <person name="Kaiser O."/>
            <person name="Meyer F."/>
            <person name="Puehler A."/>
            <person name="Weisshaar B."/>
            <person name="Wehland J."/>
            <person name="Liang C."/>
            <person name="Dandekar T."/>
            <person name="Lampidis R."/>
            <person name="Kreft J."/>
            <person name="Goebel W."/>
            <person name="Chakraborty T."/>
        </authorList>
    </citation>
    <scope>NUCLEOTIDE SEQUENCE [LARGE SCALE GENOMIC DNA]</scope>
    <source>
        <strain>ATCC 35897 / DSM 20650 / CCUG 15529 / CIP 8149 / NCTC 11857 / SLCC 5334 / V8</strain>
    </source>
</reference>
<comment type="function">
    <text evidence="1">Involved in the binding of tRNA to the ribosomes.</text>
</comment>
<comment type="subunit">
    <text evidence="1">Part of the 30S ribosomal subunit.</text>
</comment>
<comment type="similarity">
    <text evidence="1">Belongs to the universal ribosomal protein uS10 family.</text>
</comment>
<accession>A0ALW9</accession>
<protein>
    <recommendedName>
        <fullName evidence="1">Small ribosomal subunit protein uS10</fullName>
    </recommendedName>
    <alternativeName>
        <fullName evidence="2">30S ribosomal protein S10</fullName>
    </alternativeName>
</protein>
<evidence type="ECO:0000255" key="1">
    <source>
        <dbReference type="HAMAP-Rule" id="MF_00508"/>
    </source>
</evidence>
<evidence type="ECO:0000305" key="2"/>
<feature type="chain" id="PRO_1000015046" description="Small ribosomal subunit protein uS10">
    <location>
        <begin position="1"/>
        <end position="102"/>
    </location>
</feature>
<gene>
    <name evidence="1" type="primary">rpsJ</name>
    <name type="ordered locus">lwe2583</name>
</gene>
<proteinExistence type="inferred from homology"/>
<dbReference type="EMBL" id="AM263198">
    <property type="protein sequence ID" value="CAK22001.1"/>
    <property type="molecule type" value="Genomic_DNA"/>
</dbReference>
<dbReference type="RefSeq" id="WP_003720954.1">
    <property type="nucleotide sequence ID" value="NC_008555.1"/>
</dbReference>
<dbReference type="SMR" id="A0ALW9"/>
<dbReference type="STRING" id="386043.lwe2583"/>
<dbReference type="GeneID" id="93240514"/>
<dbReference type="KEGG" id="lwe:lwe2583"/>
<dbReference type="eggNOG" id="COG0051">
    <property type="taxonomic scope" value="Bacteria"/>
</dbReference>
<dbReference type="HOGENOM" id="CLU_122625_1_3_9"/>
<dbReference type="OrthoDB" id="9804464at2"/>
<dbReference type="Proteomes" id="UP000000779">
    <property type="component" value="Chromosome"/>
</dbReference>
<dbReference type="GO" id="GO:1990904">
    <property type="term" value="C:ribonucleoprotein complex"/>
    <property type="evidence" value="ECO:0007669"/>
    <property type="project" value="UniProtKB-KW"/>
</dbReference>
<dbReference type="GO" id="GO:0005840">
    <property type="term" value="C:ribosome"/>
    <property type="evidence" value="ECO:0007669"/>
    <property type="project" value="UniProtKB-KW"/>
</dbReference>
<dbReference type="GO" id="GO:0003735">
    <property type="term" value="F:structural constituent of ribosome"/>
    <property type="evidence" value="ECO:0007669"/>
    <property type="project" value="InterPro"/>
</dbReference>
<dbReference type="GO" id="GO:0000049">
    <property type="term" value="F:tRNA binding"/>
    <property type="evidence" value="ECO:0007669"/>
    <property type="project" value="UniProtKB-UniRule"/>
</dbReference>
<dbReference type="GO" id="GO:0006412">
    <property type="term" value="P:translation"/>
    <property type="evidence" value="ECO:0007669"/>
    <property type="project" value="UniProtKB-UniRule"/>
</dbReference>
<dbReference type="FunFam" id="3.30.70.600:FF:000001">
    <property type="entry name" value="30S ribosomal protein S10"/>
    <property type="match status" value="1"/>
</dbReference>
<dbReference type="Gene3D" id="3.30.70.600">
    <property type="entry name" value="Ribosomal protein S10 domain"/>
    <property type="match status" value="1"/>
</dbReference>
<dbReference type="HAMAP" id="MF_00508">
    <property type="entry name" value="Ribosomal_uS10"/>
    <property type="match status" value="1"/>
</dbReference>
<dbReference type="InterPro" id="IPR001848">
    <property type="entry name" value="Ribosomal_uS10"/>
</dbReference>
<dbReference type="InterPro" id="IPR018268">
    <property type="entry name" value="Ribosomal_uS10_CS"/>
</dbReference>
<dbReference type="InterPro" id="IPR027486">
    <property type="entry name" value="Ribosomal_uS10_dom"/>
</dbReference>
<dbReference type="InterPro" id="IPR036838">
    <property type="entry name" value="Ribosomal_uS10_dom_sf"/>
</dbReference>
<dbReference type="NCBIfam" id="NF001861">
    <property type="entry name" value="PRK00596.1"/>
    <property type="match status" value="1"/>
</dbReference>
<dbReference type="NCBIfam" id="TIGR01049">
    <property type="entry name" value="rpsJ_bact"/>
    <property type="match status" value="1"/>
</dbReference>
<dbReference type="PANTHER" id="PTHR11700">
    <property type="entry name" value="30S RIBOSOMAL PROTEIN S10 FAMILY MEMBER"/>
    <property type="match status" value="1"/>
</dbReference>
<dbReference type="Pfam" id="PF00338">
    <property type="entry name" value="Ribosomal_S10"/>
    <property type="match status" value="1"/>
</dbReference>
<dbReference type="PRINTS" id="PR00971">
    <property type="entry name" value="RIBOSOMALS10"/>
</dbReference>
<dbReference type="SMART" id="SM01403">
    <property type="entry name" value="Ribosomal_S10"/>
    <property type="match status" value="1"/>
</dbReference>
<dbReference type="SUPFAM" id="SSF54999">
    <property type="entry name" value="Ribosomal protein S10"/>
    <property type="match status" value="1"/>
</dbReference>
<dbReference type="PROSITE" id="PS00361">
    <property type="entry name" value="RIBOSOMAL_S10"/>
    <property type="match status" value="1"/>
</dbReference>
<sequence length="102" mass="11682">MAKQKIRIRLKAYDHRILDQSAEKIVETAKRSGASVSGPIPLPTEKSIYTVLRAVHKYKDSREQFEMRTHKRLIDIVNPTPQTVDSLMRLDLPSGVDIEIKL</sequence>
<name>RS10_LISW6</name>